<dbReference type="EMBL" id="AE009948">
    <property type="protein sequence ID" value="AAN00954.1"/>
    <property type="molecule type" value="Genomic_DNA"/>
</dbReference>
<dbReference type="RefSeq" id="NP_689081.1">
    <property type="nucleotide sequence ID" value="NC_004116.1"/>
</dbReference>
<dbReference type="RefSeq" id="WP_000272487.1">
    <property type="nucleotide sequence ID" value="NC_004116.1"/>
</dbReference>
<dbReference type="SMR" id="Q8DWW6"/>
<dbReference type="STRING" id="208435.SAG2096"/>
<dbReference type="KEGG" id="sag:SAG2096"/>
<dbReference type="PATRIC" id="fig|208435.3.peg.2099"/>
<dbReference type="HOGENOM" id="CLU_087936_1_0_9"/>
<dbReference type="OrthoDB" id="5293449at2"/>
<dbReference type="Proteomes" id="UP000000821">
    <property type="component" value="Chromosome"/>
</dbReference>
<dbReference type="GO" id="GO:0005737">
    <property type="term" value="C:cytoplasm"/>
    <property type="evidence" value="ECO:0007669"/>
    <property type="project" value="UniProtKB-SubCell"/>
</dbReference>
<dbReference type="GO" id="GO:0009379">
    <property type="term" value="C:Holliday junction helicase complex"/>
    <property type="evidence" value="ECO:0007669"/>
    <property type="project" value="InterPro"/>
</dbReference>
<dbReference type="GO" id="GO:0048476">
    <property type="term" value="C:Holliday junction resolvase complex"/>
    <property type="evidence" value="ECO:0007669"/>
    <property type="project" value="UniProtKB-UniRule"/>
</dbReference>
<dbReference type="GO" id="GO:0005524">
    <property type="term" value="F:ATP binding"/>
    <property type="evidence" value="ECO:0007669"/>
    <property type="project" value="InterPro"/>
</dbReference>
<dbReference type="GO" id="GO:0000400">
    <property type="term" value="F:four-way junction DNA binding"/>
    <property type="evidence" value="ECO:0007669"/>
    <property type="project" value="UniProtKB-UniRule"/>
</dbReference>
<dbReference type="GO" id="GO:0009378">
    <property type="term" value="F:four-way junction helicase activity"/>
    <property type="evidence" value="ECO:0007669"/>
    <property type="project" value="InterPro"/>
</dbReference>
<dbReference type="GO" id="GO:0006310">
    <property type="term" value="P:DNA recombination"/>
    <property type="evidence" value="ECO:0007669"/>
    <property type="project" value="UniProtKB-UniRule"/>
</dbReference>
<dbReference type="GO" id="GO:0006281">
    <property type="term" value="P:DNA repair"/>
    <property type="evidence" value="ECO:0007669"/>
    <property type="project" value="UniProtKB-UniRule"/>
</dbReference>
<dbReference type="CDD" id="cd14332">
    <property type="entry name" value="UBA_RuvA_C"/>
    <property type="match status" value="1"/>
</dbReference>
<dbReference type="Gene3D" id="1.10.150.20">
    <property type="entry name" value="5' to 3' exonuclease, C-terminal subdomain"/>
    <property type="match status" value="1"/>
</dbReference>
<dbReference type="Gene3D" id="1.10.8.10">
    <property type="entry name" value="DNA helicase RuvA subunit, C-terminal domain"/>
    <property type="match status" value="1"/>
</dbReference>
<dbReference type="Gene3D" id="2.40.50.140">
    <property type="entry name" value="Nucleic acid-binding proteins"/>
    <property type="match status" value="1"/>
</dbReference>
<dbReference type="HAMAP" id="MF_00031">
    <property type="entry name" value="DNA_HJ_migration_RuvA"/>
    <property type="match status" value="1"/>
</dbReference>
<dbReference type="InterPro" id="IPR013849">
    <property type="entry name" value="DNA_helicase_Holl-junc_RuvA_I"/>
</dbReference>
<dbReference type="InterPro" id="IPR003583">
    <property type="entry name" value="Hlx-hairpin-Hlx_DNA-bd_motif"/>
</dbReference>
<dbReference type="InterPro" id="IPR012340">
    <property type="entry name" value="NA-bd_OB-fold"/>
</dbReference>
<dbReference type="InterPro" id="IPR000085">
    <property type="entry name" value="RuvA"/>
</dbReference>
<dbReference type="InterPro" id="IPR010994">
    <property type="entry name" value="RuvA_2-like"/>
</dbReference>
<dbReference type="InterPro" id="IPR011114">
    <property type="entry name" value="RuvA_C"/>
</dbReference>
<dbReference type="InterPro" id="IPR036267">
    <property type="entry name" value="RuvA_C_sf"/>
</dbReference>
<dbReference type="NCBIfam" id="TIGR00084">
    <property type="entry name" value="ruvA"/>
    <property type="match status" value="1"/>
</dbReference>
<dbReference type="Pfam" id="PF14520">
    <property type="entry name" value="HHH_5"/>
    <property type="match status" value="1"/>
</dbReference>
<dbReference type="Pfam" id="PF07499">
    <property type="entry name" value="RuvA_C"/>
    <property type="match status" value="1"/>
</dbReference>
<dbReference type="Pfam" id="PF01330">
    <property type="entry name" value="RuvA_N"/>
    <property type="match status" value="1"/>
</dbReference>
<dbReference type="SMART" id="SM00278">
    <property type="entry name" value="HhH1"/>
    <property type="match status" value="2"/>
</dbReference>
<dbReference type="SUPFAM" id="SSF46929">
    <property type="entry name" value="DNA helicase RuvA subunit, C-terminal domain"/>
    <property type="match status" value="1"/>
</dbReference>
<dbReference type="SUPFAM" id="SSF50249">
    <property type="entry name" value="Nucleic acid-binding proteins"/>
    <property type="match status" value="1"/>
</dbReference>
<dbReference type="SUPFAM" id="SSF47781">
    <property type="entry name" value="RuvA domain 2-like"/>
    <property type="match status" value="1"/>
</dbReference>
<name>RUVA_STRA5</name>
<gene>
    <name evidence="1" type="primary">ruvA</name>
    <name type="ordered locus">SAG2096</name>
</gene>
<protein>
    <recommendedName>
        <fullName evidence="1">Holliday junction branch migration complex subunit RuvA</fullName>
    </recommendedName>
</protein>
<proteinExistence type="inferred from homology"/>
<evidence type="ECO:0000255" key="1">
    <source>
        <dbReference type="HAMAP-Rule" id="MF_00031"/>
    </source>
</evidence>
<feature type="chain" id="PRO_0000094687" description="Holliday junction branch migration complex subunit RuvA">
    <location>
        <begin position="1"/>
        <end position="196"/>
    </location>
</feature>
<feature type="region of interest" description="Domain I" evidence="1">
    <location>
        <begin position="1"/>
        <end position="63"/>
    </location>
</feature>
<feature type="region of interest" description="Domain II" evidence="1">
    <location>
        <begin position="64"/>
        <end position="142"/>
    </location>
</feature>
<feature type="region of interest" description="Flexible linker" evidence="1">
    <location>
        <begin position="143"/>
        <end position="148"/>
    </location>
</feature>
<feature type="region of interest" description="Domain III" evidence="1">
    <location>
        <begin position="148"/>
        <end position="196"/>
    </location>
</feature>
<organism>
    <name type="scientific">Streptococcus agalactiae serotype V (strain ATCC BAA-611 / 2603 V/R)</name>
    <dbReference type="NCBI Taxonomy" id="208435"/>
    <lineage>
        <taxon>Bacteria</taxon>
        <taxon>Bacillati</taxon>
        <taxon>Bacillota</taxon>
        <taxon>Bacilli</taxon>
        <taxon>Lactobacillales</taxon>
        <taxon>Streptococcaceae</taxon>
        <taxon>Streptococcus</taxon>
    </lineage>
</organism>
<accession>Q8DWW6</accession>
<reference key="1">
    <citation type="journal article" date="2002" name="Proc. Natl. Acad. Sci. U.S.A.">
        <title>Complete genome sequence and comparative genomic analysis of an emerging human pathogen, serotype V Streptococcus agalactiae.</title>
        <authorList>
            <person name="Tettelin H."/>
            <person name="Masignani V."/>
            <person name="Cieslewicz M.J."/>
            <person name="Eisen J.A."/>
            <person name="Peterson S.N."/>
            <person name="Wessels M.R."/>
            <person name="Paulsen I.T."/>
            <person name="Nelson K.E."/>
            <person name="Margarit I."/>
            <person name="Read T.D."/>
            <person name="Madoff L.C."/>
            <person name="Wolf A.M."/>
            <person name="Beanan M.J."/>
            <person name="Brinkac L.M."/>
            <person name="Daugherty S.C."/>
            <person name="DeBoy R.T."/>
            <person name="Durkin A.S."/>
            <person name="Kolonay J.F."/>
            <person name="Madupu R."/>
            <person name="Lewis M.R."/>
            <person name="Radune D."/>
            <person name="Fedorova N.B."/>
            <person name="Scanlan D."/>
            <person name="Khouri H.M."/>
            <person name="Mulligan S."/>
            <person name="Carty H.A."/>
            <person name="Cline R.T."/>
            <person name="Van Aken S.E."/>
            <person name="Gill J."/>
            <person name="Scarselli M."/>
            <person name="Mora M."/>
            <person name="Iacobini E.T."/>
            <person name="Brettoni C."/>
            <person name="Galli G."/>
            <person name="Mariani M."/>
            <person name="Vegni F."/>
            <person name="Maione D."/>
            <person name="Rinaudo D."/>
            <person name="Rappuoli R."/>
            <person name="Telford J.L."/>
            <person name="Kasper D.L."/>
            <person name="Grandi G."/>
            <person name="Fraser C.M."/>
        </authorList>
    </citation>
    <scope>NUCLEOTIDE SEQUENCE [LARGE SCALE GENOMIC DNA]</scope>
    <source>
        <strain>ATCC BAA-611 / 2603 V/R</strain>
    </source>
</reference>
<sequence>MYDYIKGKLSKITAKFIVVETAGLGYMIYVANPYSFSGYVNQEVTIYLHQVIRDDAHLLFGFHTENEKEIFLNLISVSGIGPTTALAIIAVDDNEGLVSAIDNSDIKYLTKFPKIGKKTAQQMILDLSGKFVEASGESATSRKVSSEQNSNLEEAMEALLALGYKATELKKVKAFFEGTNETVEQYIKSSLKMLMK</sequence>
<comment type="function">
    <text evidence="1">The RuvA-RuvB-RuvC complex processes Holliday junction (HJ) DNA during genetic recombination and DNA repair, while the RuvA-RuvB complex plays an important role in the rescue of blocked DNA replication forks via replication fork reversal (RFR). RuvA specifically binds to HJ cruciform DNA, conferring on it an open structure. The RuvB hexamer acts as an ATP-dependent pump, pulling dsDNA into and through the RuvAB complex. HJ branch migration allows RuvC to scan DNA until it finds its consensus sequence, where it cleaves and resolves the cruciform DNA.</text>
</comment>
<comment type="subunit">
    <text evidence="1">Homotetramer. Forms an RuvA(8)-RuvB(12)-Holliday junction (HJ) complex. HJ DNA is sandwiched between 2 RuvA tetramers; dsDNA enters through RuvA and exits via RuvB. An RuvB hexamer assembles on each DNA strand where it exits the tetramer. Each RuvB hexamer is contacted by two RuvA subunits (via domain III) on 2 adjacent RuvB subunits; this complex drives branch migration. In the full resolvosome a probable DNA-RuvA(4)-RuvB(12)-RuvC(2) complex forms which resolves the HJ.</text>
</comment>
<comment type="subcellular location">
    <subcellularLocation>
        <location evidence="1">Cytoplasm</location>
    </subcellularLocation>
</comment>
<comment type="domain">
    <text evidence="1">Has three domains with a flexible linker between the domains II and III and assumes an 'L' shape. Domain III is highly mobile and contacts RuvB.</text>
</comment>
<comment type="similarity">
    <text evidence="1">Belongs to the RuvA family.</text>
</comment>
<keyword id="KW-0963">Cytoplasm</keyword>
<keyword id="KW-0227">DNA damage</keyword>
<keyword id="KW-0233">DNA recombination</keyword>
<keyword id="KW-0234">DNA repair</keyword>
<keyword id="KW-0238">DNA-binding</keyword>
<keyword id="KW-1185">Reference proteome</keyword>